<sequence>MGNCAKRPRHRAPKDRELRPEEIEELQAAFQEFDRDRDGYIGYQELGACMRTLGYMPTEMELIEISQQISGGKVDFEDFVELMGPKLLAETADMIGVRELRDAFREFDTNGDGCISLGELRAALKALLGERLSQREVDEILRDIDLNGDGLVDFEEFVRMMSR</sequence>
<feature type="initiator methionine" description="Removed">
    <location>
        <position position="1"/>
    </location>
</feature>
<feature type="chain" id="PRO_0000073516" description="Calcium-binding protein 2">
    <location>
        <begin position="2"/>
        <end position="163"/>
    </location>
</feature>
<feature type="domain" description="EF-hand 1" evidence="3">
    <location>
        <begin position="21"/>
        <end position="56"/>
    </location>
</feature>
<feature type="domain" description="EF-hand 2" evidence="3">
    <location>
        <begin position="72"/>
        <end position="89"/>
    </location>
</feature>
<feature type="domain" description="EF-hand 3" evidence="3">
    <location>
        <begin position="95"/>
        <end position="130"/>
    </location>
</feature>
<feature type="domain" description="EF-hand 4" evidence="3">
    <location>
        <begin position="132"/>
        <end position="163"/>
    </location>
</feature>
<feature type="binding site" evidence="3">
    <location>
        <position position="34"/>
    </location>
    <ligand>
        <name>Ca(2+)</name>
        <dbReference type="ChEBI" id="CHEBI:29108"/>
        <label>1</label>
    </ligand>
</feature>
<feature type="binding site" evidence="3">
    <location>
        <position position="36"/>
    </location>
    <ligand>
        <name>Ca(2+)</name>
        <dbReference type="ChEBI" id="CHEBI:29108"/>
        <label>1</label>
    </ligand>
</feature>
<feature type="binding site" evidence="3">
    <location>
        <position position="38"/>
    </location>
    <ligand>
        <name>Ca(2+)</name>
        <dbReference type="ChEBI" id="CHEBI:29108"/>
        <label>1</label>
    </ligand>
</feature>
<feature type="binding site" evidence="3">
    <location>
        <position position="40"/>
    </location>
    <ligand>
        <name>Ca(2+)</name>
        <dbReference type="ChEBI" id="CHEBI:29108"/>
        <label>1</label>
    </ligand>
</feature>
<feature type="binding site" evidence="3">
    <location>
        <position position="45"/>
    </location>
    <ligand>
        <name>Ca(2+)</name>
        <dbReference type="ChEBI" id="CHEBI:29108"/>
        <label>1</label>
    </ligand>
</feature>
<feature type="binding site" evidence="3">
    <location>
        <position position="108"/>
    </location>
    <ligand>
        <name>Ca(2+)</name>
        <dbReference type="ChEBI" id="CHEBI:29108"/>
        <label>2</label>
    </ligand>
</feature>
<feature type="binding site" evidence="3">
    <location>
        <position position="110"/>
    </location>
    <ligand>
        <name>Ca(2+)</name>
        <dbReference type="ChEBI" id="CHEBI:29108"/>
        <label>2</label>
    </ligand>
</feature>
<feature type="binding site" evidence="3">
    <location>
        <position position="112"/>
    </location>
    <ligand>
        <name>Ca(2+)</name>
        <dbReference type="ChEBI" id="CHEBI:29108"/>
        <label>2</label>
    </ligand>
</feature>
<feature type="binding site" evidence="3">
    <location>
        <position position="114"/>
    </location>
    <ligand>
        <name>Ca(2+)</name>
        <dbReference type="ChEBI" id="CHEBI:29108"/>
        <label>2</label>
    </ligand>
</feature>
<feature type="binding site" evidence="3">
    <location>
        <position position="119"/>
    </location>
    <ligand>
        <name>Ca(2+)</name>
        <dbReference type="ChEBI" id="CHEBI:29108"/>
        <label>2</label>
    </ligand>
</feature>
<feature type="binding site" evidence="3">
    <location>
        <position position="145"/>
    </location>
    <ligand>
        <name>Ca(2+)</name>
        <dbReference type="ChEBI" id="CHEBI:29108"/>
        <label>3</label>
    </ligand>
</feature>
<feature type="binding site" evidence="3">
    <location>
        <position position="147"/>
    </location>
    <ligand>
        <name>Ca(2+)</name>
        <dbReference type="ChEBI" id="CHEBI:29108"/>
        <label>3</label>
    </ligand>
</feature>
<feature type="binding site" evidence="3">
    <location>
        <position position="149"/>
    </location>
    <ligand>
        <name>Ca(2+)</name>
        <dbReference type="ChEBI" id="CHEBI:29108"/>
        <label>3</label>
    </ligand>
</feature>
<feature type="binding site" evidence="3">
    <location>
        <position position="156"/>
    </location>
    <ligand>
        <name>Ca(2+)</name>
        <dbReference type="ChEBI" id="CHEBI:29108"/>
        <label>3</label>
    </ligand>
</feature>
<feature type="lipid moiety-binding region" description="N-myristoyl glycine" evidence="1">
    <location>
        <position position="2"/>
    </location>
</feature>
<dbReference type="EMBL" id="AF169155">
    <property type="protein sequence ID" value="AAF25789.1"/>
    <property type="molecule type" value="mRNA"/>
</dbReference>
<dbReference type="RefSeq" id="NP_776680.1">
    <property type="nucleotide sequence ID" value="NM_174255.2"/>
</dbReference>
<dbReference type="SMR" id="Q9N1Q9"/>
<dbReference type="STRING" id="9913.ENSBTAP00000029967"/>
<dbReference type="PaxDb" id="9913-ENSBTAP00000029967"/>
<dbReference type="GeneID" id="281654"/>
<dbReference type="KEGG" id="bta:281654"/>
<dbReference type="CTD" id="51475"/>
<dbReference type="eggNOG" id="KOG0027">
    <property type="taxonomic scope" value="Eukaryota"/>
</dbReference>
<dbReference type="HOGENOM" id="CLU_061288_2_2_1"/>
<dbReference type="InParanoid" id="Q9N1Q9"/>
<dbReference type="OrthoDB" id="26525at2759"/>
<dbReference type="TreeFam" id="TF334804"/>
<dbReference type="Proteomes" id="UP000009136">
    <property type="component" value="Unplaced"/>
</dbReference>
<dbReference type="GO" id="GO:0005737">
    <property type="term" value="C:cytoplasm"/>
    <property type="evidence" value="ECO:0000318"/>
    <property type="project" value="GO_Central"/>
</dbReference>
<dbReference type="GO" id="GO:0005794">
    <property type="term" value="C:Golgi apparatus"/>
    <property type="evidence" value="ECO:0007669"/>
    <property type="project" value="UniProtKB-SubCell"/>
</dbReference>
<dbReference type="GO" id="GO:0048471">
    <property type="term" value="C:perinuclear region of cytoplasm"/>
    <property type="evidence" value="ECO:0007669"/>
    <property type="project" value="UniProtKB-SubCell"/>
</dbReference>
<dbReference type="GO" id="GO:0005886">
    <property type="term" value="C:plasma membrane"/>
    <property type="evidence" value="ECO:0007669"/>
    <property type="project" value="UniProtKB-SubCell"/>
</dbReference>
<dbReference type="GO" id="GO:0005246">
    <property type="term" value="F:calcium channel regulator activity"/>
    <property type="evidence" value="ECO:0000250"/>
    <property type="project" value="UniProtKB"/>
</dbReference>
<dbReference type="GO" id="GO:0005509">
    <property type="term" value="F:calcium ion binding"/>
    <property type="evidence" value="ECO:0007669"/>
    <property type="project" value="InterPro"/>
</dbReference>
<dbReference type="GO" id="GO:0007605">
    <property type="term" value="P:sensory perception of sound"/>
    <property type="evidence" value="ECO:0000250"/>
    <property type="project" value="UniProtKB"/>
</dbReference>
<dbReference type="GO" id="GO:0007601">
    <property type="term" value="P:visual perception"/>
    <property type="evidence" value="ECO:0000250"/>
    <property type="project" value="UniProtKB"/>
</dbReference>
<dbReference type="CDD" id="cd00051">
    <property type="entry name" value="EFh"/>
    <property type="match status" value="1"/>
</dbReference>
<dbReference type="FunFam" id="1.10.238.10:FF:000069">
    <property type="entry name" value="calcium-binding protein 1 isoform X1"/>
    <property type="match status" value="1"/>
</dbReference>
<dbReference type="FunFam" id="1.10.238.10:FF:000037">
    <property type="entry name" value="calcium-binding protein 1 isoform X2"/>
    <property type="match status" value="1"/>
</dbReference>
<dbReference type="Gene3D" id="1.10.238.10">
    <property type="entry name" value="EF-hand"/>
    <property type="match status" value="2"/>
</dbReference>
<dbReference type="InterPro" id="IPR043582">
    <property type="entry name" value="CaBP1/2/4/5"/>
</dbReference>
<dbReference type="InterPro" id="IPR011992">
    <property type="entry name" value="EF-hand-dom_pair"/>
</dbReference>
<dbReference type="InterPro" id="IPR018247">
    <property type="entry name" value="EF_Hand_1_Ca_BS"/>
</dbReference>
<dbReference type="InterPro" id="IPR002048">
    <property type="entry name" value="EF_hand_dom"/>
</dbReference>
<dbReference type="PANTHER" id="PTHR45917">
    <property type="entry name" value="CALCIUM-BINDING PROTEIN 1-RELATED"/>
    <property type="match status" value="1"/>
</dbReference>
<dbReference type="PANTHER" id="PTHR45917:SF2">
    <property type="entry name" value="CALCIUM-BINDING PROTEIN 2"/>
    <property type="match status" value="1"/>
</dbReference>
<dbReference type="Pfam" id="PF00036">
    <property type="entry name" value="EF-hand_1"/>
    <property type="match status" value="1"/>
</dbReference>
<dbReference type="Pfam" id="PF13499">
    <property type="entry name" value="EF-hand_7"/>
    <property type="match status" value="1"/>
</dbReference>
<dbReference type="SMART" id="SM00054">
    <property type="entry name" value="EFh"/>
    <property type="match status" value="3"/>
</dbReference>
<dbReference type="SUPFAM" id="SSF47473">
    <property type="entry name" value="EF-hand"/>
    <property type="match status" value="1"/>
</dbReference>
<dbReference type="PROSITE" id="PS00018">
    <property type="entry name" value="EF_HAND_1"/>
    <property type="match status" value="3"/>
</dbReference>
<dbReference type="PROSITE" id="PS50222">
    <property type="entry name" value="EF_HAND_2"/>
    <property type="match status" value="4"/>
</dbReference>
<evidence type="ECO:0000250" key="1"/>
<evidence type="ECO:0000250" key="2">
    <source>
        <dbReference type="UniProtKB" id="Q9JLK4"/>
    </source>
</evidence>
<evidence type="ECO:0000255" key="3">
    <source>
        <dbReference type="PROSITE-ProRule" id="PRU00448"/>
    </source>
</evidence>
<reference key="1">
    <citation type="journal article" date="2000" name="J. Biol. Chem.">
        <title>Five members of a novel Ca(2+)-binding protein (CABP) subfamily with similarity to calmodulin.</title>
        <authorList>
            <person name="Haeseleer F."/>
            <person name="Sokal I."/>
            <person name="Verlinde C.L.M.J."/>
            <person name="Erdjument-Bromage H."/>
            <person name="Tempst P."/>
            <person name="Pronin A.N."/>
            <person name="Benovic J.L."/>
            <person name="Fariss R.N."/>
            <person name="Palczewski K."/>
        </authorList>
    </citation>
    <scope>NUCLEOTIDE SEQUENCE [MRNA]</scope>
    <source>
        <tissue>Retina</tissue>
    </source>
</reference>
<organism>
    <name type="scientific">Bos taurus</name>
    <name type="common">Bovine</name>
    <dbReference type="NCBI Taxonomy" id="9913"/>
    <lineage>
        <taxon>Eukaryota</taxon>
        <taxon>Metazoa</taxon>
        <taxon>Chordata</taxon>
        <taxon>Craniata</taxon>
        <taxon>Vertebrata</taxon>
        <taxon>Euteleostomi</taxon>
        <taxon>Mammalia</taxon>
        <taxon>Eutheria</taxon>
        <taxon>Laurasiatheria</taxon>
        <taxon>Artiodactyla</taxon>
        <taxon>Ruminantia</taxon>
        <taxon>Pecora</taxon>
        <taxon>Bovidae</taxon>
        <taxon>Bovinae</taxon>
        <taxon>Bos</taxon>
    </lineage>
</organism>
<gene>
    <name type="primary">CABP2</name>
</gene>
<keyword id="KW-0106">Calcium</keyword>
<keyword id="KW-1003">Cell membrane</keyword>
<keyword id="KW-0963">Cytoplasm</keyword>
<keyword id="KW-0333">Golgi apparatus</keyword>
<keyword id="KW-1009">Hearing</keyword>
<keyword id="KW-0449">Lipoprotein</keyword>
<keyword id="KW-0472">Membrane</keyword>
<keyword id="KW-0479">Metal-binding</keyword>
<keyword id="KW-0519">Myristate</keyword>
<keyword id="KW-1185">Reference proteome</keyword>
<keyword id="KW-0677">Repeat</keyword>
<keyword id="KW-0716">Sensory transduction</keyword>
<keyword id="KW-0844">Vision</keyword>
<comment type="function">
    <text evidence="2">Required for sound encoding at inner hair cells (IHCs) synapses, likely via inhibition of the inactivation of voltage-gated calcium channel of type 1.3 (Cav1.3) in the IHCs. Required for the normal transfer of light signals through the retina.</text>
</comment>
<comment type="subcellular location">
    <subcellularLocation>
        <location evidence="1">Cytoplasm</location>
        <location evidence="1">Perinuclear region</location>
    </subcellularLocation>
    <subcellularLocation>
        <location evidence="1">Cell membrane</location>
        <topology evidence="1">Lipid-anchor</topology>
        <orientation evidence="1">Cytoplasmic side</orientation>
    </subcellularLocation>
    <subcellularLocation>
        <location evidence="1">Golgi apparatus</location>
    </subcellularLocation>
</comment>
<protein>
    <recommendedName>
        <fullName>Calcium-binding protein 2</fullName>
        <shortName>CaBP2</shortName>
    </recommendedName>
</protein>
<accession>Q9N1Q9</accession>
<proteinExistence type="evidence at transcript level"/>
<name>CABP2_BOVIN</name>